<sequence>MAPAAGPRTGKHAKPQRSKTLKRKRGQEELSSLIQRVEDLDLKGIFKSFSDLPLSEPTASGLASSHYKTLTDIQSRAISHALKGRDILGAAKTGSGKTLAFLVPVLENLYRKQWAEHDGLGALILSPTRELAIQIFEVLRKIGRYHTFSAGLVIGGKSLKEEQERLGRMNILVCTPGRMLQHLDQTALFDTYNLQMLVLDEADRILDLGFQQTVDAIIGHLPKERQTLLFSATQTKKVSDLARLSLQDPEYVAVHETASSATPSKLQQHYVITPLPQKLDILWSFIRSNLKSKTMVFLSSGKQVRFVYESFRHLQPGIPLMHLHGRQKQGGRLDIVTRFSQSKHCVLFSTDVAARGLDFPAVDWVIQLDCPEDADTYIHRVGRTARYEREGRAVLFLDPSEEEGMLKRLEQKKVPIEKINIKANKQQSIKDQLQNMCFKDPELKYLGQKAFISYVKSVYIQKDKEIFKLKELKLDEFAASLGLPGAPRIKFIKGDDTKQRKNAPRAAAHLLSDDDDTDEEDGEKKSKKKEEPQVRTKYDRMFERRNQDVLAEHYSKLINDDGTMVAPNAGAGADADEDDDFLSVKRRFDAGDKDLGSSGDEDDESEKGNKKNVKVRREKLLKSKKKLLKFKGKGTKLVYDDEGNPHELYELEDEEQFKARGDAKDQQAKFLAEEAERTRLADMEDKEIAKQKRREKKEKRKARERELLAEAEEEETLVQLPPYEGDQDDEAPRPSKKPKVKFTEANDREEAEPWYKKSKKSSDQAAHTPRQIQTLEDLESLATGLLG</sequence>
<proteinExistence type="inferred from homology"/>
<organism>
    <name type="scientific">Aspergillus fumigatus (strain ATCC MYA-4609 / CBS 101355 / FGSC A1100 / Af293)</name>
    <name type="common">Neosartorya fumigata</name>
    <dbReference type="NCBI Taxonomy" id="330879"/>
    <lineage>
        <taxon>Eukaryota</taxon>
        <taxon>Fungi</taxon>
        <taxon>Dikarya</taxon>
        <taxon>Ascomycota</taxon>
        <taxon>Pezizomycotina</taxon>
        <taxon>Eurotiomycetes</taxon>
        <taxon>Eurotiomycetidae</taxon>
        <taxon>Eurotiales</taxon>
        <taxon>Aspergillaceae</taxon>
        <taxon>Aspergillus</taxon>
        <taxon>Aspergillus subgen. Fumigati</taxon>
    </lineage>
</organism>
<dbReference type="EC" id="3.6.4.13"/>
<dbReference type="EMBL" id="AL807577">
    <property type="protein sequence ID" value="CAD37144.1"/>
    <property type="status" value="ALT_SEQ"/>
    <property type="molecule type" value="Genomic_DNA"/>
</dbReference>
<dbReference type="EMBL" id="AAHF01000006">
    <property type="protein sequence ID" value="EAL88954.1"/>
    <property type="molecule type" value="Genomic_DNA"/>
</dbReference>
<dbReference type="RefSeq" id="XP_750992.1">
    <property type="nucleotide sequence ID" value="XM_745899.1"/>
</dbReference>
<dbReference type="SMR" id="Q4WM60"/>
<dbReference type="FunCoup" id="Q4WM60">
    <property type="interactions" value="1033"/>
</dbReference>
<dbReference type="STRING" id="330879.Q4WM60"/>
<dbReference type="EnsemblFungi" id="EAL88954">
    <property type="protein sequence ID" value="EAL88954"/>
    <property type="gene ID" value="AFUA_6G11070"/>
</dbReference>
<dbReference type="GeneID" id="3508297"/>
<dbReference type="KEGG" id="afm:AFUA_6G11070"/>
<dbReference type="VEuPathDB" id="FungiDB:Afu6g11070"/>
<dbReference type="eggNOG" id="KOG0343">
    <property type="taxonomic scope" value="Eukaryota"/>
</dbReference>
<dbReference type="HOGENOM" id="CLU_003041_26_1_1"/>
<dbReference type="InParanoid" id="Q4WM60"/>
<dbReference type="OMA" id="YDKMFER"/>
<dbReference type="OrthoDB" id="10259640at2759"/>
<dbReference type="Proteomes" id="UP000002530">
    <property type="component" value="Chromosome 6"/>
</dbReference>
<dbReference type="GO" id="GO:0005730">
    <property type="term" value="C:nucleolus"/>
    <property type="evidence" value="ECO:0007669"/>
    <property type="project" value="UniProtKB-SubCell"/>
</dbReference>
<dbReference type="GO" id="GO:0005634">
    <property type="term" value="C:nucleus"/>
    <property type="evidence" value="ECO:0000318"/>
    <property type="project" value="GO_Central"/>
</dbReference>
<dbReference type="GO" id="GO:0032040">
    <property type="term" value="C:small-subunit processome"/>
    <property type="evidence" value="ECO:0007669"/>
    <property type="project" value="EnsemblFungi"/>
</dbReference>
<dbReference type="GO" id="GO:0005524">
    <property type="term" value="F:ATP binding"/>
    <property type="evidence" value="ECO:0007669"/>
    <property type="project" value="UniProtKB-KW"/>
</dbReference>
<dbReference type="GO" id="GO:0016887">
    <property type="term" value="F:ATP hydrolysis activity"/>
    <property type="evidence" value="ECO:0007669"/>
    <property type="project" value="RHEA"/>
</dbReference>
<dbReference type="GO" id="GO:0042802">
    <property type="term" value="F:identical protein binding"/>
    <property type="evidence" value="ECO:0007669"/>
    <property type="project" value="EnsemblFungi"/>
</dbReference>
<dbReference type="GO" id="GO:0003723">
    <property type="term" value="F:RNA binding"/>
    <property type="evidence" value="ECO:0007669"/>
    <property type="project" value="UniProtKB-KW"/>
</dbReference>
<dbReference type="GO" id="GO:0003724">
    <property type="term" value="F:RNA helicase activity"/>
    <property type="evidence" value="ECO:0007669"/>
    <property type="project" value="UniProtKB-EC"/>
</dbReference>
<dbReference type="GO" id="GO:0006364">
    <property type="term" value="P:rRNA processing"/>
    <property type="evidence" value="ECO:0000318"/>
    <property type="project" value="GO_Central"/>
</dbReference>
<dbReference type="CDD" id="cd17941">
    <property type="entry name" value="DEADc_DDX10"/>
    <property type="match status" value="1"/>
</dbReference>
<dbReference type="CDD" id="cd18787">
    <property type="entry name" value="SF2_C_DEAD"/>
    <property type="match status" value="1"/>
</dbReference>
<dbReference type="Gene3D" id="3.40.50.300">
    <property type="entry name" value="P-loop containing nucleotide triphosphate hydrolases"/>
    <property type="match status" value="2"/>
</dbReference>
<dbReference type="InterPro" id="IPR011545">
    <property type="entry name" value="DEAD/DEAH_box_helicase_dom"/>
</dbReference>
<dbReference type="InterPro" id="IPR014001">
    <property type="entry name" value="Helicase_ATP-bd"/>
</dbReference>
<dbReference type="InterPro" id="IPR001650">
    <property type="entry name" value="Helicase_C-like"/>
</dbReference>
<dbReference type="InterPro" id="IPR027417">
    <property type="entry name" value="P-loop_NTPase"/>
</dbReference>
<dbReference type="InterPro" id="IPR000629">
    <property type="entry name" value="RNA-helicase_DEAD-box_CS"/>
</dbReference>
<dbReference type="InterPro" id="IPR014014">
    <property type="entry name" value="RNA_helicase_DEAD_Q_motif"/>
</dbReference>
<dbReference type="InterPro" id="IPR025313">
    <property type="entry name" value="SPB4-like_CTE"/>
</dbReference>
<dbReference type="PANTHER" id="PTHR24031">
    <property type="entry name" value="RNA HELICASE"/>
    <property type="match status" value="1"/>
</dbReference>
<dbReference type="Pfam" id="PF13959">
    <property type="entry name" value="CTE_SPB4"/>
    <property type="match status" value="1"/>
</dbReference>
<dbReference type="Pfam" id="PF00270">
    <property type="entry name" value="DEAD"/>
    <property type="match status" value="1"/>
</dbReference>
<dbReference type="Pfam" id="PF00271">
    <property type="entry name" value="Helicase_C"/>
    <property type="match status" value="1"/>
</dbReference>
<dbReference type="SMART" id="SM00487">
    <property type="entry name" value="DEXDc"/>
    <property type="match status" value="1"/>
</dbReference>
<dbReference type="SMART" id="SM01178">
    <property type="entry name" value="DUF4217"/>
    <property type="match status" value="1"/>
</dbReference>
<dbReference type="SMART" id="SM00490">
    <property type="entry name" value="HELICc"/>
    <property type="match status" value="1"/>
</dbReference>
<dbReference type="SUPFAM" id="SSF52540">
    <property type="entry name" value="P-loop containing nucleoside triphosphate hydrolases"/>
    <property type="match status" value="1"/>
</dbReference>
<dbReference type="PROSITE" id="PS00039">
    <property type="entry name" value="DEAD_ATP_HELICASE"/>
    <property type="match status" value="1"/>
</dbReference>
<dbReference type="PROSITE" id="PS51192">
    <property type="entry name" value="HELICASE_ATP_BIND_1"/>
    <property type="match status" value="1"/>
</dbReference>
<dbReference type="PROSITE" id="PS51194">
    <property type="entry name" value="HELICASE_CTER"/>
    <property type="match status" value="1"/>
</dbReference>
<dbReference type="PROSITE" id="PS51195">
    <property type="entry name" value="Q_MOTIF"/>
    <property type="match status" value="1"/>
</dbReference>
<feature type="chain" id="PRO_0000232194" description="ATP-dependent RNA helicase dbp4">
    <location>
        <begin position="1"/>
        <end position="787"/>
    </location>
</feature>
<feature type="domain" description="Helicase ATP-binding" evidence="2">
    <location>
        <begin position="78"/>
        <end position="252"/>
    </location>
</feature>
<feature type="domain" description="Helicase C-terminal" evidence="3">
    <location>
        <begin position="278"/>
        <end position="437"/>
    </location>
</feature>
<feature type="region of interest" description="Disordered" evidence="4">
    <location>
        <begin position="1"/>
        <end position="28"/>
    </location>
</feature>
<feature type="region of interest" description="Disordered" evidence="4">
    <location>
        <begin position="494"/>
        <end position="542"/>
    </location>
</feature>
<feature type="region of interest" description="Disordered" evidence="4">
    <location>
        <begin position="560"/>
        <end position="579"/>
    </location>
</feature>
<feature type="region of interest" description="Disordered" evidence="4">
    <location>
        <begin position="586"/>
        <end position="618"/>
    </location>
</feature>
<feature type="region of interest" description="Disordered" evidence="4">
    <location>
        <begin position="653"/>
        <end position="776"/>
    </location>
</feature>
<feature type="short sequence motif" description="Q motif">
    <location>
        <begin position="47"/>
        <end position="75"/>
    </location>
</feature>
<feature type="short sequence motif" description="DEAD box">
    <location>
        <begin position="200"/>
        <end position="203"/>
    </location>
</feature>
<feature type="compositionally biased region" description="Basic residues" evidence="4">
    <location>
        <begin position="9"/>
        <end position="25"/>
    </location>
</feature>
<feature type="compositionally biased region" description="Basic and acidic residues" evidence="4">
    <location>
        <begin position="522"/>
        <end position="542"/>
    </location>
</feature>
<feature type="compositionally biased region" description="Basic and acidic residues" evidence="4">
    <location>
        <begin position="586"/>
        <end position="595"/>
    </location>
</feature>
<feature type="compositionally biased region" description="Basic and acidic residues" evidence="4">
    <location>
        <begin position="656"/>
        <end position="690"/>
    </location>
</feature>
<feature type="compositionally biased region" description="Basic residues" evidence="4">
    <location>
        <begin position="691"/>
        <end position="700"/>
    </location>
</feature>
<feature type="compositionally biased region" description="Basic and acidic residues" evidence="4">
    <location>
        <begin position="741"/>
        <end position="755"/>
    </location>
</feature>
<feature type="binding site" evidence="2">
    <location>
        <begin position="91"/>
        <end position="98"/>
    </location>
    <ligand>
        <name>ATP</name>
        <dbReference type="ChEBI" id="CHEBI:30616"/>
    </ligand>
</feature>
<reference key="1">
    <citation type="submission" date="2002-06" db="EMBL/GenBank/DDBJ databases">
        <authorList>
            <person name="Harris D.E."/>
            <person name="O'Neil S."/>
            <person name="Knowles D.G."/>
            <person name="Hall N."/>
            <person name="Quail M.A."/>
            <person name="Woodward J.R."/>
            <person name="Denning D.W."/>
            <person name="Anderson M.J."/>
            <person name="Barrell B.G."/>
        </authorList>
    </citation>
    <scope>NUCLEOTIDE SEQUENCE [GENOMIC DNA]</scope>
    <source>
        <strain>ATCC MYA-4609 / CBS 101355 / FGSC A1100 / Af293</strain>
    </source>
</reference>
<reference key="2">
    <citation type="journal article" date="2005" name="Nature">
        <title>Genomic sequence of the pathogenic and allergenic filamentous fungus Aspergillus fumigatus.</title>
        <authorList>
            <person name="Nierman W.C."/>
            <person name="Pain A."/>
            <person name="Anderson M.J."/>
            <person name="Wortman J.R."/>
            <person name="Kim H.S."/>
            <person name="Arroyo J."/>
            <person name="Berriman M."/>
            <person name="Abe K."/>
            <person name="Archer D.B."/>
            <person name="Bermejo C."/>
            <person name="Bennett J.W."/>
            <person name="Bowyer P."/>
            <person name="Chen D."/>
            <person name="Collins M."/>
            <person name="Coulsen R."/>
            <person name="Davies R."/>
            <person name="Dyer P.S."/>
            <person name="Farman M.L."/>
            <person name="Fedorova N."/>
            <person name="Fedorova N.D."/>
            <person name="Feldblyum T.V."/>
            <person name="Fischer R."/>
            <person name="Fosker N."/>
            <person name="Fraser A."/>
            <person name="Garcia J.L."/>
            <person name="Garcia M.J."/>
            <person name="Goble A."/>
            <person name="Goldman G.H."/>
            <person name="Gomi K."/>
            <person name="Griffith-Jones S."/>
            <person name="Gwilliam R."/>
            <person name="Haas B.J."/>
            <person name="Haas H."/>
            <person name="Harris D.E."/>
            <person name="Horiuchi H."/>
            <person name="Huang J."/>
            <person name="Humphray S."/>
            <person name="Jimenez J."/>
            <person name="Keller N."/>
            <person name="Khouri H."/>
            <person name="Kitamoto K."/>
            <person name="Kobayashi T."/>
            <person name="Konzack S."/>
            <person name="Kulkarni R."/>
            <person name="Kumagai T."/>
            <person name="Lafton A."/>
            <person name="Latge J.-P."/>
            <person name="Li W."/>
            <person name="Lord A."/>
            <person name="Lu C."/>
            <person name="Majoros W.H."/>
            <person name="May G.S."/>
            <person name="Miller B.L."/>
            <person name="Mohamoud Y."/>
            <person name="Molina M."/>
            <person name="Monod M."/>
            <person name="Mouyna I."/>
            <person name="Mulligan S."/>
            <person name="Murphy L.D."/>
            <person name="O'Neil S."/>
            <person name="Paulsen I."/>
            <person name="Penalva M.A."/>
            <person name="Pertea M."/>
            <person name="Price C."/>
            <person name="Pritchard B.L."/>
            <person name="Quail M.A."/>
            <person name="Rabbinowitsch E."/>
            <person name="Rawlins N."/>
            <person name="Rajandream M.A."/>
            <person name="Reichard U."/>
            <person name="Renauld H."/>
            <person name="Robson G.D."/>
            <person name="Rodriguez de Cordoba S."/>
            <person name="Rodriguez-Pena J.M."/>
            <person name="Ronning C.M."/>
            <person name="Rutter S."/>
            <person name="Salzberg S.L."/>
            <person name="Sanchez M."/>
            <person name="Sanchez-Ferrero J.C."/>
            <person name="Saunders D."/>
            <person name="Seeger K."/>
            <person name="Squares R."/>
            <person name="Squares S."/>
            <person name="Takeuchi M."/>
            <person name="Tekaia F."/>
            <person name="Turner G."/>
            <person name="Vazquez de Aldana C.R."/>
            <person name="Weidman J."/>
            <person name="White O."/>
            <person name="Woodward J.R."/>
            <person name="Yu J.-H."/>
            <person name="Fraser C.M."/>
            <person name="Galagan J.E."/>
            <person name="Asai K."/>
            <person name="Machida M."/>
            <person name="Hall N."/>
            <person name="Barrell B.G."/>
            <person name="Denning D.W."/>
        </authorList>
    </citation>
    <scope>NUCLEOTIDE SEQUENCE [LARGE SCALE GENOMIC DNA]</scope>
    <source>
        <strain>ATCC MYA-4609 / CBS 101355 / FGSC A1100 / Af293</strain>
    </source>
</reference>
<comment type="function">
    <text evidence="1">ATP-dependent RNA helicase required for ribosome biogenesis. Involved in the release of U14 snoRNA in pre-ribosomal complexes. Required for pre-rRNA cleavage at site A2 (By similarity).</text>
</comment>
<comment type="catalytic activity">
    <reaction>
        <text>ATP + H2O = ADP + phosphate + H(+)</text>
        <dbReference type="Rhea" id="RHEA:13065"/>
        <dbReference type="ChEBI" id="CHEBI:15377"/>
        <dbReference type="ChEBI" id="CHEBI:15378"/>
        <dbReference type="ChEBI" id="CHEBI:30616"/>
        <dbReference type="ChEBI" id="CHEBI:43474"/>
        <dbReference type="ChEBI" id="CHEBI:456216"/>
        <dbReference type="EC" id="3.6.4.13"/>
    </reaction>
</comment>
<comment type="subunit">
    <text evidence="1">Interacts with the U3 and U14 snoRNAs. Associates with pre-ribosomal complexes (By similarity).</text>
</comment>
<comment type="subcellular location">
    <subcellularLocation>
        <location evidence="1">Nucleus</location>
        <location evidence="1">Nucleolus</location>
    </subcellularLocation>
</comment>
<comment type="domain">
    <text>The Q motif is unique to and characteristic of the DEAD box family of RNA helicases and controls ATP binding and hydrolysis.</text>
</comment>
<comment type="similarity">
    <text evidence="5">Belongs to the DEAD box helicase family. DDX10/DBP4 subfamily.</text>
</comment>
<comment type="sequence caution" evidence="5">
    <conflict type="erroneous gene model prediction">
        <sequence resource="EMBL-CDS" id="CAD37144"/>
    </conflict>
</comment>
<evidence type="ECO:0000250" key="1"/>
<evidence type="ECO:0000255" key="2">
    <source>
        <dbReference type="PROSITE-ProRule" id="PRU00541"/>
    </source>
</evidence>
<evidence type="ECO:0000255" key="3">
    <source>
        <dbReference type="PROSITE-ProRule" id="PRU00542"/>
    </source>
</evidence>
<evidence type="ECO:0000256" key="4">
    <source>
        <dbReference type="SAM" id="MobiDB-lite"/>
    </source>
</evidence>
<evidence type="ECO:0000305" key="5"/>
<keyword id="KW-0067">ATP-binding</keyword>
<keyword id="KW-0347">Helicase</keyword>
<keyword id="KW-0378">Hydrolase</keyword>
<keyword id="KW-0547">Nucleotide-binding</keyword>
<keyword id="KW-0539">Nucleus</keyword>
<keyword id="KW-1185">Reference proteome</keyword>
<keyword id="KW-0690">Ribosome biogenesis</keyword>
<keyword id="KW-0694">RNA-binding</keyword>
<keyword id="KW-0698">rRNA processing</keyword>
<gene>
    <name type="primary">dbp4</name>
    <name type="ORF">AfA12H2.06</name>
    <name type="ORF">AFUA_6G11070</name>
</gene>
<accession>Q4WM60</accession>
<accession>Q8NJM5</accession>
<protein>
    <recommendedName>
        <fullName>ATP-dependent RNA helicase dbp4</fullName>
        <ecNumber>3.6.4.13</ecNumber>
    </recommendedName>
</protein>
<name>DBP4_ASPFU</name>